<dbReference type="EC" id="2.4.1.363" evidence="3 4"/>
<dbReference type="EMBL" id="KF377585">
    <property type="protein sequence ID" value="AIE12479.1"/>
    <property type="molecule type" value="mRNA"/>
</dbReference>
<dbReference type="SMR" id="A0A068J840"/>
<dbReference type="KEGG" id="ag:AIE12479"/>
<dbReference type="UniPathway" id="UPA00213"/>
<dbReference type="GO" id="GO:0035251">
    <property type="term" value="F:UDP-glucosyltransferase activity"/>
    <property type="evidence" value="ECO:0007669"/>
    <property type="project" value="InterPro"/>
</dbReference>
<dbReference type="GO" id="GO:0016114">
    <property type="term" value="P:terpenoid biosynthetic process"/>
    <property type="evidence" value="ECO:0007669"/>
    <property type="project" value="UniProtKB-UniPathway"/>
</dbReference>
<dbReference type="CDD" id="cd03784">
    <property type="entry name" value="GT1_Gtf-like"/>
    <property type="match status" value="1"/>
</dbReference>
<dbReference type="FunFam" id="3.40.50.2000:FF:000056">
    <property type="entry name" value="Glycosyltransferase"/>
    <property type="match status" value="1"/>
</dbReference>
<dbReference type="Gene3D" id="3.40.50.2000">
    <property type="entry name" value="Glycogen Phosphorylase B"/>
    <property type="match status" value="2"/>
</dbReference>
<dbReference type="InterPro" id="IPR050481">
    <property type="entry name" value="UDP-glycosyltransf_plant"/>
</dbReference>
<dbReference type="InterPro" id="IPR002213">
    <property type="entry name" value="UDP_glucos_trans"/>
</dbReference>
<dbReference type="InterPro" id="IPR035595">
    <property type="entry name" value="UDP_glycos_trans_CS"/>
</dbReference>
<dbReference type="PANTHER" id="PTHR48048">
    <property type="entry name" value="GLYCOSYLTRANSFERASE"/>
    <property type="match status" value="1"/>
</dbReference>
<dbReference type="PANTHER" id="PTHR48048:SF45">
    <property type="entry name" value="GLYCOSYLTRANSFERASE"/>
    <property type="match status" value="1"/>
</dbReference>
<dbReference type="Pfam" id="PF00201">
    <property type="entry name" value="UDPGT"/>
    <property type="match status" value="1"/>
</dbReference>
<dbReference type="SUPFAM" id="SSF53756">
    <property type="entry name" value="UDP-Glycosyltransferase/glycogen phosphorylase"/>
    <property type="match status" value="1"/>
</dbReference>
<dbReference type="PROSITE" id="PS00375">
    <property type="entry name" value="UDPGT"/>
    <property type="match status" value="1"/>
</dbReference>
<keyword id="KW-0328">Glycosyltransferase</keyword>
<keyword id="KW-0414">Isoprene biosynthesis</keyword>
<keyword id="KW-0808">Transferase</keyword>
<evidence type="ECO:0000250" key="1">
    <source>
        <dbReference type="UniProtKB" id="A0A0A1HA03"/>
    </source>
</evidence>
<evidence type="ECO:0000250" key="2">
    <source>
        <dbReference type="UniProtKB" id="P51094"/>
    </source>
</evidence>
<evidence type="ECO:0000269" key="3">
    <source>
    </source>
</evidence>
<evidence type="ECO:0000269" key="4">
    <source>
    </source>
</evidence>
<evidence type="ECO:0000303" key="5">
    <source>
    </source>
</evidence>
<evidence type="ECO:0000303" key="6">
    <source>
    </source>
</evidence>
<evidence type="ECO:0000303" key="7">
    <source>
    </source>
</evidence>
<evidence type="ECO:0000305" key="8"/>
<gene>
    <name evidence="5" type="primary">UGT1</name>
</gene>
<feature type="chain" id="PRO_0000446969" description="UDP-glycosyltransferase 1">
    <location>
        <begin position="1"/>
        <end position="475"/>
    </location>
</feature>
<feature type="active site" description="Proton acceptor" evidence="1">
    <location>
        <position position="15"/>
    </location>
</feature>
<feature type="active site" description="Charge relay" evidence="1">
    <location>
        <position position="117"/>
    </location>
</feature>
<feature type="binding site" evidence="2">
    <location>
        <position position="15"/>
    </location>
    <ligand>
        <name>an anthocyanidin</name>
        <dbReference type="ChEBI" id="CHEBI:143576"/>
    </ligand>
</feature>
<feature type="binding site" evidence="1">
    <location>
        <position position="345"/>
    </location>
    <ligand>
        <name>UDP-alpha-D-glucose</name>
        <dbReference type="ChEBI" id="CHEBI:58885"/>
    </ligand>
</feature>
<feature type="binding site" evidence="1">
    <location>
        <position position="347"/>
    </location>
    <ligand>
        <name>UDP-alpha-D-glucose</name>
        <dbReference type="ChEBI" id="CHEBI:58885"/>
    </ligand>
</feature>
<feature type="binding site" evidence="1">
    <location>
        <position position="362"/>
    </location>
    <ligand>
        <name>UDP-alpha-D-glucose</name>
        <dbReference type="ChEBI" id="CHEBI:58885"/>
    </ligand>
</feature>
<feature type="binding site" evidence="1">
    <location>
        <position position="365"/>
    </location>
    <ligand>
        <name>UDP-alpha-D-glucose</name>
        <dbReference type="ChEBI" id="CHEBI:58885"/>
    </ligand>
</feature>
<feature type="binding site" evidence="1">
    <location>
        <position position="366"/>
    </location>
    <ligand>
        <name>UDP-alpha-D-glucose</name>
        <dbReference type="ChEBI" id="CHEBI:58885"/>
    </ligand>
</feature>
<feature type="binding site" evidence="1">
    <location>
        <position position="367"/>
    </location>
    <ligand>
        <name>UDP-alpha-D-glucose</name>
        <dbReference type="ChEBI" id="CHEBI:58885"/>
    </ligand>
</feature>
<feature type="binding site" evidence="1">
    <location>
        <position position="370"/>
    </location>
    <ligand>
        <name>UDP-alpha-D-glucose</name>
        <dbReference type="ChEBI" id="CHEBI:58885"/>
    </ligand>
</feature>
<feature type="binding site" evidence="2">
    <location>
        <position position="385"/>
    </location>
    <ligand>
        <name>an anthocyanidin</name>
        <dbReference type="ChEBI" id="CHEBI:143576"/>
    </ligand>
</feature>
<feature type="binding site" evidence="1">
    <location>
        <position position="386"/>
    </location>
    <ligand>
        <name>UDP-alpha-D-glucose</name>
        <dbReference type="ChEBI" id="CHEBI:58885"/>
    </ligand>
</feature>
<feature type="binding site" evidence="1">
    <location>
        <position position="387"/>
    </location>
    <ligand>
        <name>UDP-alpha-D-glucose</name>
        <dbReference type="ChEBI" id="CHEBI:58885"/>
    </ligand>
</feature>
<feature type="site" description="Essential for the glycosylation activity toward the C20-OH of protopanaxatriol (PPT)" evidence="4">
    <location>
        <position position="144"/>
    </location>
</feature>
<feature type="mutagenesis site" description="Reduced ability to transfer a glucose residue to the C20-OH of protopanaxatriol (PPT)." evidence="4">
    <original>A</original>
    <variation>V</variation>
    <location>
        <position position="10"/>
    </location>
</feature>
<feature type="mutagenesis site" description="Reduced ability to transfer a glucose residue to the C20-OH of protopanaxatriol (PPT)." evidence="4">
    <original>I</original>
    <variation>F</variation>
    <location>
        <position position="13"/>
    </location>
</feature>
<feature type="mutagenesis site" description="Normal ability to transfer a glucose residue to the C20-OH of protopanaxatriol (PPT)." evidence="4">
    <original>L</original>
    <variation>F</variation>
    <location>
        <position position="38"/>
    </location>
</feature>
<feature type="mutagenesis site" description="Normal ability to transfer a glucose residue to the C20-OH of protopanaxatriol (PPT)." evidence="4">
    <original>A</original>
    <variation>S</variation>
    <location>
        <position position="40"/>
    </location>
</feature>
<feature type="mutagenesis site" description="Normal ability to transfer a glucose residue to the C20-OH of protopanaxatriol (PPT) and gained ability to transfer a glucose residue to the C6-OH; thus producing both ginsenosides F1 and Rh1." evidence="4">
    <original>H</original>
    <variation>C</variation>
    <location>
        <position position="82"/>
    </location>
</feature>
<feature type="mutagenesis site" description="Normal ability to transfer a glucose residue to the C20-OH of protopanaxatriol (PPT)." evidence="4">
    <original>F</original>
    <variation>L</variation>
    <location>
        <position position="85"/>
    </location>
</feature>
<feature type="mutagenesis site" description="Normal ability to transfer a glucose residue to the C20-OH of protopanaxatriol (PPT)." evidence="4">
    <original>T</original>
    <variation>I</variation>
    <location>
        <position position="134"/>
    </location>
</feature>
<feature type="mutagenesis site" description="Normal ability to transfer a glucose residue to the C20-OH of protopanaxatriol (PPT) and gained weak ability to transfer a glucose residue to the C6-OH; thus producing both ginsenosides F1 and Rh1." evidence="4">
    <original>H</original>
    <variation>F</variation>
    <location>
        <position position="144"/>
    </location>
</feature>
<feature type="mutagenesis site" description="Loss of glycosylase activity toward protopanaxatriol (PPT)." evidence="4">
    <original>H</original>
    <variation>Y</variation>
    <location>
        <position position="144"/>
    </location>
</feature>
<feature type="mutagenesis site" description="Normal ability to transfer a glucose residue to the C20-OH of protopanaxatriol (PPT)." evidence="4">
    <original>Q</original>
    <variation>H</variation>
    <location>
        <position position="388"/>
    </location>
</feature>
<reference key="1">
    <citation type="journal article" date="2014" name="Cell Res.">
        <title>Production of bioactive ginsenoside compound K in metabolically engineered yeast.</title>
        <authorList>
            <person name="Yan X."/>
            <person name="Fan Y."/>
            <person name="Wei W."/>
            <person name="Wang P."/>
            <person name="Liu Q."/>
            <person name="Wei Y."/>
            <person name="Zhang L."/>
            <person name="Zhao G."/>
            <person name="Yue J."/>
            <person name="Zhou Z."/>
        </authorList>
    </citation>
    <scope>NUCLEOTIDE SEQUENCE [MRNA]</scope>
    <scope>FUNCTION</scope>
    <scope>CATALYTIC ACTIVITY</scope>
    <scope>BIOPHYSICOCHEMICAL PROPERTIES</scope>
    <scope>TISSUE SPECIFICITY</scope>
</reference>
<reference key="2">
    <citation type="journal article" date="2015" name="Mol. Plant">
        <title>Characterization of Panax ginseng UDP-glycosyltransferases catalyzing protopanaxatriol and biosyntheses of bioactive ginsenosides F1 and Rh1 in metabolically engineered yeasts.</title>
        <authorList>
            <person name="Wei W."/>
            <person name="Wang P."/>
            <person name="Wei Y."/>
            <person name="Liu Q."/>
            <person name="Yang C."/>
            <person name="Zhao G."/>
            <person name="Yue J."/>
            <person name="Yan X."/>
            <person name="Zhou Z."/>
        </authorList>
    </citation>
    <scope>FUNCTION</scope>
    <scope>CATALYTIC ACTIVITY</scope>
    <scope>MUTAGENESIS OF ALA-10; ILE-13; LEU-38; ALA-40; HIS-82; PHE-85; THR-134; HIS-144 AND GLN-388</scope>
</reference>
<reference key="3">
    <citation type="journal article" date="2018" name="Biotechnol. Appl. Biochem.">
        <title>Advances in ginsenoside biosynthesis and metabolic regulation.</title>
        <authorList>
            <person name="Lu J."/>
            <person name="Li J."/>
            <person name="Wang S."/>
            <person name="Yao L."/>
            <person name="Liang W."/>
            <person name="Wang J."/>
            <person name="Gao W."/>
        </authorList>
    </citation>
    <scope>REVIEW</scope>
</reference>
<reference key="4">
    <citation type="journal article" date="2018" name="Molecules">
        <title>Progress on the studies of the key enzymes of ginsenoside biosynthesis.</title>
        <authorList>
            <person name="Yang J.-L."/>
            <person name="Hu Z.-F."/>
            <person name="Zhang T.-T."/>
            <person name="Gu A.-D."/>
            <person name="Gong T."/>
            <person name="Zhu P."/>
        </authorList>
    </citation>
    <scope>REVIEW</scope>
    <scope>NOMENCLATURE</scope>
</reference>
<accession>A0A068J840</accession>
<sequence length="475" mass="53374">MKSELIFLPAPAIGHLVGMVEMAKLFISRHENLSVTVLIAKFYMDTGVDNYNKSLLTNPTPRLTIVNLPETDPQNYMLKPRHAIFPSVIETQKTHVRDIISGMTQSESTQVVGLLADLLFINIMDIANEFNVPTYVYSPAGAGHLGLAFHLQTLNDKKQDVTEFRNSDTELLVPSFANPVPAEVLPSMYVDKEGGYDYLFSLFRRCRESKAIIINTFEELEPYAINSLRMDSMIPPIYPVGPILNLNGDGQNSDEAAVILGWLDDQPPSSVVFLCFGSYGSFQENQVKEIAMGLERSGHRFLWSLRPSIPKGETKLQLKYSNLKEILPVGFLDRTSCVGKVIGWAPQVAVLGHESVGGFLSHCGWNSTLESVWCGVPVATWPMYGEQQLNAFEMVKELGIAVEIEVDYKKDYFNMKNDFIVRAEEIETKIKKLMMDENNSEIRKKVKEMKEKSRAAMSENGSSYNSLAKLFEEIM</sequence>
<proteinExistence type="evidence at protein level"/>
<comment type="function">
    <text evidence="3 4 6">Component of the dammarane-type triterpene saponins (e.g. ginsenosides or panaxosides) biosynthetic pathway (PubMed:26032089, PubMed:29378087). Glycosyltransferase that catalyzes the biosynthesis of ginsenoside F1 from protopanaxatriol (PPT) (PubMed:26032089). Triggers C20-OH glycosylation of ginsenoside Rg3 to produce ginsenoside Rd (PubMed:26032089). Mediates the conversion of protopanaxadiol (PPD) to the ginsenoside compound K (PubMed:24603359, PubMed:26032089). catalyzes the production of 20S-O-beta-(D-glucosyl)-dammarenediol II form dammarenediol II (DM) (PubMed:24603359).</text>
</comment>
<comment type="catalytic activity">
    <reaction evidence="3 4">
        <text>(20S)-protopanaxadiol + UDP-alpha-D-glucose = (20S)-ginsenoside C-K + UDP + H(+)</text>
        <dbReference type="Rhea" id="RHEA:57976"/>
        <dbReference type="ChEBI" id="CHEBI:15378"/>
        <dbReference type="ChEBI" id="CHEBI:58223"/>
        <dbReference type="ChEBI" id="CHEBI:58885"/>
        <dbReference type="ChEBI" id="CHEBI:75950"/>
        <dbReference type="ChEBI" id="CHEBI:77146"/>
        <dbReference type="EC" id="2.4.1.363"/>
    </reaction>
    <physiologicalReaction direction="left-to-right" evidence="3 4">
        <dbReference type="Rhea" id="RHEA:57977"/>
    </physiologicalReaction>
</comment>
<comment type="catalytic activity">
    <reaction evidence="4">
        <text>(20S)-ginsenoside Rg3 + UDP-alpha-D-glucose = (20S)-ginsenoside Rd + UDP + H(+)</text>
        <dbReference type="Rhea" id="RHEA:57984"/>
        <dbReference type="ChEBI" id="CHEBI:15378"/>
        <dbReference type="ChEBI" id="CHEBI:58223"/>
        <dbReference type="ChEBI" id="CHEBI:58885"/>
        <dbReference type="ChEBI" id="CHEBI:67988"/>
        <dbReference type="ChEBI" id="CHEBI:67991"/>
        <dbReference type="EC" id="2.4.1.363"/>
    </reaction>
    <physiologicalReaction direction="left-to-right" evidence="4">
        <dbReference type="Rhea" id="RHEA:57985"/>
    </physiologicalReaction>
</comment>
<comment type="catalytic activity">
    <reaction evidence="4">
        <text>(20S)-ginsenoside Rh2 + UDP-alpha-D-glucose = (20S)-ginsenoside F2 + UDP + H(+)</text>
        <dbReference type="Rhea" id="RHEA:57988"/>
        <dbReference type="ChEBI" id="CHEBI:15378"/>
        <dbReference type="ChEBI" id="CHEBI:58223"/>
        <dbReference type="ChEBI" id="CHEBI:58885"/>
        <dbReference type="ChEBI" id="CHEBI:77145"/>
        <dbReference type="ChEBI" id="CHEBI:77147"/>
        <dbReference type="EC" id="2.4.1.363"/>
    </reaction>
    <physiologicalReaction direction="left-to-right" evidence="4">
        <dbReference type="Rhea" id="RHEA:57989"/>
    </physiologicalReaction>
</comment>
<comment type="catalytic activity">
    <reaction evidence="4">
        <text>(20S)-protopanaxatriol + UDP-alpha-D-glucose = (20S)-ginsenoside F1 + UDP + H(+)</text>
        <dbReference type="Rhea" id="RHEA:57980"/>
        <dbReference type="ChEBI" id="CHEBI:15378"/>
        <dbReference type="ChEBI" id="CHEBI:58223"/>
        <dbReference type="ChEBI" id="CHEBI:58885"/>
        <dbReference type="ChEBI" id="CHEBI:75951"/>
        <dbReference type="ChEBI" id="CHEBI:77150"/>
        <dbReference type="EC" id="2.4.1.363"/>
    </reaction>
    <physiologicalReaction direction="left-to-right" evidence="4">
        <dbReference type="Rhea" id="RHEA:57981"/>
    </physiologicalReaction>
</comment>
<comment type="catalytic activity">
    <reaction evidence="3 4">
        <text>dammarenediol-II + UDP-alpha-D-glucose = (20S)-20-O-(beta-D-glucosyl)-3-hydroxydammarene + UDP + H(+)</text>
        <dbReference type="Rhea" id="RHEA:59044"/>
        <dbReference type="ChEBI" id="CHEBI:15378"/>
        <dbReference type="ChEBI" id="CHEBI:58223"/>
        <dbReference type="ChEBI" id="CHEBI:58885"/>
        <dbReference type="ChEBI" id="CHEBI:62416"/>
        <dbReference type="ChEBI" id="CHEBI:142484"/>
        <dbReference type="EC" id="2.4.1.363"/>
    </reaction>
    <physiologicalReaction direction="left-to-right" evidence="3 4">
        <dbReference type="Rhea" id="RHEA:59045"/>
    </physiologicalReaction>
</comment>
<comment type="biophysicochemical properties">
    <kinetics>
        <KM evidence="3">359 uM for protopanaxadiol</KM>
        <KM evidence="3">178 uM for dammarenediol II</KM>
        <Vmax evidence="3">254.0 nmol/min/mg enzyme with protopanaxadiol as substrate</Vmax>
        <Vmax evidence="3">423.0 nmol/min/mg enzyme with dammarenediol II as substrate</Vmax>
        <text evidence="3">kcat is 9.4 sec(-1) with protopanaxadiol as substrate (PubMed:24603359). kcat is 12.7 sec(-1) with dammarenediol II as substrate (PubMed:24603359).</text>
    </kinetics>
</comment>
<comment type="pathway">
    <text evidence="8">Secondary metabolite biosynthesis; terpenoid biosynthesis.</text>
</comment>
<comment type="tissue specificity">
    <text evidence="3">Mostly expressed in leaves and flowers, and, to a lower extent, in roots and stems.</text>
</comment>
<comment type="similarity">
    <text evidence="8">Belongs to the UDP-glycosyltransferase family.</text>
</comment>
<name>UGT1_PANGI</name>
<protein>
    <recommendedName>
        <fullName evidence="5">UDP-glycosyltransferase 1</fullName>
        <shortName evidence="5 7">UGTPg1</shortName>
        <ecNumber evidence="3 4">2.4.1.363</ecNumber>
    </recommendedName>
</protein>
<organism>
    <name type="scientific">Panax ginseng</name>
    <name type="common">Korean ginseng</name>
    <dbReference type="NCBI Taxonomy" id="4054"/>
    <lineage>
        <taxon>Eukaryota</taxon>
        <taxon>Viridiplantae</taxon>
        <taxon>Streptophyta</taxon>
        <taxon>Embryophyta</taxon>
        <taxon>Tracheophyta</taxon>
        <taxon>Spermatophyta</taxon>
        <taxon>Magnoliopsida</taxon>
        <taxon>eudicotyledons</taxon>
        <taxon>Gunneridae</taxon>
        <taxon>Pentapetalae</taxon>
        <taxon>asterids</taxon>
        <taxon>campanulids</taxon>
        <taxon>Apiales</taxon>
        <taxon>Araliaceae</taxon>
        <taxon>Panax</taxon>
    </lineage>
</organism>